<organism>
    <name type="scientific">Caenorhabditis elegans</name>
    <dbReference type="NCBI Taxonomy" id="6239"/>
    <lineage>
        <taxon>Eukaryota</taxon>
        <taxon>Metazoa</taxon>
        <taxon>Ecdysozoa</taxon>
        <taxon>Nematoda</taxon>
        <taxon>Chromadorea</taxon>
        <taxon>Rhabditida</taxon>
        <taxon>Rhabditina</taxon>
        <taxon>Rhabditomorpha</taxon>
        <taxon>Rhabditoidea</taxon>
        <taxon>Rhabditidae</taxon>
        <taxon>Peloderinae</taxon>
        <taxon>Caenorhabditis</taxon>
    </lineage>
</organism>
<dbReference type="EMBL" id="BX284601">
    <property type="protein sequence ID" value="CCD73424.1"/>
    <property type="molecule type" value="Genomic_DNA"/>
</dbReference>
<dbReference type="RefSeq" id="NP_001380044.1">
    <property type="nucleotide sequence ID" value="NM_001393007.1"/>
</dbReference>
<dbReference type="RefSeq" id="NP_490924.1">
    <property type="nucleotide sequence ID" value="NM_058523.4"/>
</dbReference>
<dbReference type="FunCoup" id="Q9BKU8">
    <property type="interactions" value="1753"/>
</dbReference>
<dbReference type="STRING" id="6239.Y37E3.4.1"/>
<dbReference type="PaxDb" id="6239-Y37E3.4.2"/>
<dbReference type="PeptideAtlas" id="Q9BKU8"/>
<dbReference type="EnsemblMetazoa" id="Y37E3.4.1">
    <property type="protein sequence ID" value="Y37E3.4.1"/>
    <property type="gene ID" value="WBGene00021348"/>
</dbReference>
<dbReference type="GeneID" id="171764"/>
<dbReference type="UCSC" id="Y37E3.4">
    <property type="organism name" value="c. elegans"/>
</dbReference>
<dbReference type="AGR" id="WB:WBGene00021348"/>
<dbReference type="WormBase" id="Y37E3.4">
    <property type="protein sequence ID" value="CE26771"/>
    <property type="gene ID" value="WBGene00021348"/>
    <property type="gene designation" value="moag-4"/>
</dbReference>
<dbReference type="eggNOG" id="KOG4488">
    <property type="taxonomic scope" value="Eukaryota"/>
</dbReference>
<dbReference type="HOGENOM" id="CLU_165034_1_0_1"/>
<dbReference type="InParanoid" id="Q9BKU8"/>
<dbReference type="OMA" id="NRDADIM"/>
<dbReference type="OrthoDB" id="18018at2759"/>
<dbReference type="PhylomeDB" id="Q9BKU8"/>
<dbReference type="PRO" id="PR:Q9BKU8"/>
<dbReference type="Proteomes" id="UP000001940">
    <property type="component" value="Chromosome I"/>
</dbReference>
<dbReference type="Bgee" id="WBGene00021348">
    <property type="expression patterns" value="Expressed in embryo and 4 other cell types or tissues"/>
</dbReference>
<dbReference type="GO" id="GO:0005829">
    <property type="term" value="C:cytosol"/>
    <property type="evidence" value="ECO:0000314"/>
    <property type="project" value="WormBase"/>
</dbReference>
<dbReference type="GO" id="GO:0005634">
    <property type="term" value="C:nucleus"/>
    <property type="evidence" value="ECO:0000314"/>
    <property type="project" value="WormBase"/>
</dbReference>
<dbReference type="GO" id="GO:0031648">
    <property type="term" value="P:protein destabilization"/>
    <property type="evidence" value="ECO:0000315"/>
    <property type="project" value="UniProtKB"/>
</dbReference>
<dbReference type="InterPro" id="IPR007513">
    <property type="entry name" value="SERF-like_N"/>
</dbReference>
<dbReference type="Pfam" id="PF04419">
    <property type="entry name" value="SERF-like_N"/>
    <property type="match status" value="1"/>
</dbReference>
<gene>
    <name evidence="4 7" type="primary">moag-4</name>
    <name evidence="7" type="ORF">Y37E3.4</name>
</gene>
<name>MOAG4_CAEEL</name>
<sequence length="82" mass="8895">MTRGNQRDLAREKNQKKLADQKKRQGASGQDGNAGLSMDARMNRDADVMRIKQEKAAAKKEAEAAAAAANAKKVAKVDPLKM</sequence>
<protein>
    <recommendedName>
        <fullName evidence="4 7">Modifier of protein aggregation 4</fullName>
    </recommendedName>
    <alternativeName>
        <fullName evidence="4">Small EDRK-rich factor</fullName>
        <shortName evidence="4">SERF</shortName>
    </alternativeName>
</protein>
<feature type="chain" id="PRO_0000448245" description="Modifier of protein aggregation 4">
    <location>
        <begin position="1"/>
        <end position="82"/>
    </location>
</feature>
<feature type="region of interest" description="Disordered" evidence="1">
    <location>
        <begin position="1"/>
        <end position="41"/>
    </location>
</feature>
<feature type="region of interest" description="Disordered" evidence="1">
    <location>
        <begin position="63"/>
        <end position="82"/>
    </location>
</feature>
<feature type="compositionally biased region" description="Basic and acidic residues" evidence="1">
    <location>
        <begin position="1"/>
        <end position="23"/>
    </location>
</feature>
<feature type="mutagenesis site" description="In pk2185; suppresses protein aggregation; does not effect animal lifespan." evidence="2">
    <original>M</original>
    <variation>I</variation>
    <location>
        <position position="49"/>
    </location>
</feature>
<accession>Q9BKU8</accession>
<comment type="function">
    <text evidence="2 3">Positive regulator of protein aggregation and age-related proteotoxicity (PubMed:20723760, PubMed:28336532). Induces conformational changes in aggregation-prone proteins, driving them into compact formations preceding the formation of aggregates (PubMed:20723760, PubMed:28336532).</text>
</comment>
<comment type="subcellular location">
    <subcellularLocation>
        <location evidence="2">Cytoplasm</location>
        <location evidence="2">Cytosol</location>
    </subcellularLocation>
    <subcellularLocation>
        <location evidence="2">Nucleus</location>
    </subcellularLocation>
</comment>
<comment type="disruption phenotype">
    <text evidence="2">Suppresses protein aggregation and toxicity caused by protein aggregates.</text>
</comment>
<comment type="similarity">
    <text evidence="5">Belongs to the SERF family.</text>
</comment>
<proteinExistence type="evidence at protein level"/>
<reference evidence="6" key="1">
    <citation type="journal article" date="1998" name="Science">
        <title>Genome sequence of the nematode C. elegans: a platform for investigating biology.</title>
        <authorList>
            <consortium name="The C. elegans sequencing consortium"/>
        </authorList>
    </citation>
    <scope>NUCLEOTIDE SEQUENCE [LARGE SCALE GENOMIC DNA]</scope>
    <source>
        <strain evidence="6">Bristol N2</strain>
    </source>
</reference>
<reference evidence="5" key="2">
    <citation type="journal article" date="2010" name="Cell">
        <title>Identification of MOAG-4/SERF as a regulator of age-related proteotoxicity.</title>
        <authorList>
            <person name="van Ham T.J."/>
            <person name="Holmberg M.A."/>
            <person name="van der Goot A.T."/>
            <person name="Teuling E."/>
            <person name="Garcia-Arencibia M."/>
            <person name="Kim H.E."/>
            <person name="Du D."/>
            <person name="Thijssen K.L."/>
            <person name="Wiersma M."/>
            <person name="Burggraaff R."/>
            <person name="van Bergeijk P."/>
            <person name="van Rheenen J."/>
            <person name="Jerre van Veluw G."/>
            <person name="Hofstra R.M."/>
            <person name="Rubinsztein D.C."/>
            <person name="Nollen E.A."/>
        </authorList>
    </citation>
    <scope>FUNCTION</scope>
    <scope>SUBCELLULAR LOCATION</scope>
    <scope>DISRUPTION PHENOTYPE</scope>
    <scope>MUTAGENESIS OF MET-49</scope>
</reference>
<reference evidence="5" key="3">
    <citation type="journal article" date="2017" name="J. Biol. Chem.">
        <title>MOAG-4 promotes the aggregation of alpha-synuclein by competing with self-protective electrostatic interactions.</title>
        <authorList>
            <person name="Yoshimura Y."/>
            <person name="Holmberg M.A."/>
            <person name="Kukic P."/>
            <person name="Andersen C.B."/>
            <person name="Mata-Cabana A."/>
            <person name="Falsone S.F."/>
            <person name="Vendruscolo M."/>
            <person name="Nollen E.A.A."/>
            <person name="Mulder F.A.A."/>
        </authorList>
    </citation>
    <scope>FUNCTION</scope>
</reference>
<evidence type="ECO:0000256" key="1">
    <source>
        <dbReference type="SAM" id="MobiDB-lite"/>
    </source>
</evidence>
<evidence type="ECO:0000269" key="2">
    <source>
    </source>
</evidence>
<evidence type="ECO:0000269" key="3">
    <source>
    </source>
</evidence>
<evidence type="ECO:0000303" key="4">
    <source>
    </source>
</evidence>
<evidence type="ECO:0000305" key="5"/>
<evidence type="ECO:0000312" key="6">
    <source>
        <dbReference type="Proteomes" id="UP000001940"/>
    </source>
</evidence>
<evidence type="ECO:0000312" key="7">
    <source>
        <dbReference type="WormBase" id="Y37E3.4"/>
    </source>
</evidence>
<keyword id="KW-0963">Cytoplasm</keyword>
<keyword id="KW-0539">Nucleus</keyword>
<keyword id="KW-1185">Reference proteome</keyword>